<comment type="function">
    <text evidence="1">One of the essential components for the initiation of protein synthesis. Stabilizes the binding of IF-2 and IF-3 on the 30S subunit to which N-formylmethionyl-tRNA(fMet) subsequently binds. Helps modulate mRNA selection, yielding the 30S pre-initiation complex (PIC). Upon addition of the 50S ribosomal subunit IF-1, IF-2 and IF-3 are released leaving the mature 70S translation initiation complex.</text>
</comment>
<comment type="subunit">
    <text evidence="1">Component of the 30S ribosomal translation pre-initiation complex which assembles on the 30S ribosome in the order IF-2 and IF-3, IF-1 and N-formylmethionyl-tRNA(fMet); mRNA recruitment can occur at any time during PIC assembly.</text>
</comment>
<comment type="subcellular location">
    <subcellularLocation>
        <location evidence="1">Cytoplasm</location>
    </subcellularLocation>
</comment>
<comment type="similarity">
    <text evidence="1">Belongs to the IF-1 family.</text>
</comment>
<feature type="chain" id="PRO_0000338769" description="Translation initiation factor IF-1">
    <location>
        <begin position="1"/>
        <end position="72"/>
    </location>
</feature>
<feature type="domain" description="S1-like" evidence="1">
    <location>
        <begin position="1"/>
        <end position="72"/>
    </location>
</feature>
<sequence>MSKEEVLEFSGVVIELLPNAMFRVKLENDHEIIAHTAGRMRKNRIRVLAGDKIMVEMTPYDLTKGRITYRYK</sequence>
<keyword id="KW-0963">Cytoplasm</keyword>
<keyword id="KW-0396">Initiation factor</keyword>
<keyword id="KW-0648">Protein biosynthesis</keyword>
<keyword id="KW-0694">RNA-binding</keyword>
<keyword id="KW-0699">rRNA-binding</keyword>
<name>IF1_BARBK</name>
<organism>
    <name type="scientific">Bartonella bacilliformis (strain ATCC 35685 / KC583 / Herrer 020/F12,63)</name>
    <dbReference type="NCBI Taxonomy" id="360095"/>
    <lineage>
        <taxon>Bacteria</taxon>
        <taxon>Pseudomonadati</taxon>
        <taxon>Pseudomonadota</taxon>
        <taxon>Alphaproteobacteria</taxon>
        <taxon>Hyphomicrobiales</taxon>
        <taxon>Bartonellaceae</taxon>
        <taxon>Bartonella</taxon>
    </lineage>
</organism>
<reference key="1">
    <citation type="submission" date="2006-12" db="EMBL/GenBank/DDBJ databases">
        <authorList>
            <person name="Hendrix L."/>
            <person name="Mohamoud Y."/>
            <person name="Radune D."/>
            <person name="Shvartsbeyn A."/>
            <person name="Daugherty S."/>
            <person name="Dodson R."/>
            <person name="Durkin A.S."/>
            <person name="Harkins D."/>
            <person name="Huot H."/>
            <person name="Kothari S.P."/>
            <person name="Madupu R."/>
            <person name="Li J."/>
            <person name="Nelson W.C."/>
            <person name="Shrivastava S."/>
            <person name="Giglio M.G."/>
            <person name="Haft D."/>
            <person name="Selengut J."/>
            <person name="Fraser-Ligget C."/>
            <person name="Seshadri R."/>
        </authorList>
    </citation>
    <scope>NUCLEOTIDE SEQUENCE [LARGE SCALE GENOMIC DNA]</scope>
    <source>
        <strain>ATCC 35685 / KC583 / Herrer 020/F12,63</strain>
    </source>
</reference>
<accession>A1URE4</accession>
<protein>
    <recommendedName>
        <fullName evidence="1">Translation initiation factor IF-1</fullName>
    </recommendedName>
</protein>
<proteinExistence type="inferred from homology"/>
<gene>
    <name evidence="1" type="primary">infA</name>
    <name type="ordered locus">BARBAKC583_0211</name>
</gene>
<dbReference type="EMBL" id="CP000524">
    <property type="protein sequence ID" value="ABM45031.1"/>
    <property type="molecule type" value="Genomic_DNA"/>
</dbReference>
<dbReference type="RefSeq" id="WP_005766051.1">
    <property type="nucleotide sequence ID" value="NC_008783.1"/>
</dbReference>
<dbReference type="SMR" id="A1URE4"/>
<dbReference type="STRING" id="360095.BARBAKC583_0211"/>
<dbReference type="GeneID" id="4684453"/>
<dbReference type="KEGG" id="bbk:BARBAKC583_0211"/>
<dbReference type="PATRIC" id="fig|360095.6.peg.208"/>
<dbReference type="eggNOG" id="COG0361">
    <property type="taxonomic scope" value="Bacteria"/>
</dbReference>
<dbReference type="HOGENOM" id="CLU_151267_1_0_5"/>
<dbReference type="OrthoDB" id="9803250at2"/>
<dbReference type="Proteomes" id="UP000000643">
    <property type="component" value="Chromosome"/>
</dbReference>
<dbReference type="GO" id="GO:0005829">
    <property type="term" value="C:cytosol"/>
    <property type="evidence" value="ECO:0007669"/>
    <property type="project" value="TreeGrafter"/>
</dbReference>
<dbReference type="GO" id="GO:0043022">
    <property type="term" value="F:ribosome binding"/>
    <property type="evidence" value="ECO:0007669"/>
    <property type="project" value="UniProtKB-UniRule"/>
</dbReference>
<dbReference type="GO" id="GO:0019843">
    <property type="term" value="F:rRNA binding"/>
    <property type="evidence" value="ECO:0007669"/>
    <property type="project" value="UniProtKB-UniRule"/>
</dbReference>
<dbReference type="GO" id="GO:0003743">
    <property type="term" value="F:translation initiation factor activity"/>
    <property type="evidence" value="ECO:0007669"/>
    <property type="project" value="UniProtKB-UniRule"/>
</dbReference>
<dbReference type="CDD" id="cd04451">
    <property type="entry name" value="S1_IF1"/>
    <property type="match status" value="1"/>
</dbReference>
<dbReference type="FunFam" id="2.40.50.140:FF:000002">
    <property type="entry name" value="Translation initiation factor IF-1"/>
    <property type="match status" value="1"/>
</dbReference>
<dbReference type="Gene3D" id="2.40.50.140">
    <property type="entry name" value="Nucleic acid-binding proteins"/>
    <property type="match status" value="1"/>
</dbReference>
<dbReference type="HAMAP" id="MF_00075">
    <property type="entry name" value="IF_1"/>
    <property type="match status" value="1"/>
</dbReference>
<dbReference type="InterPro" id="IPR012340">
    <property type="entry name" value="NA-bd_OB-fold"/>
</dbReference>
<dbReference type="InterPro" id="IPR006196">
    <property type="entry name" value="RNA-binding_domain_S1_IF1"/>
</dbReference>
<dbReference type="InterPro" id="IPR004368">
    <property type="entry name" value="TIF_IF1"/>
</dbReference>
<dbReference type="NCBIfam" id="TIGR00008">
    <property type="entry name" value="infA"/>
    <property type="match status" value="1"/>
</dbReference>
<dbReference type="PANTHER" id="PTHR33370">
    <property type="entry name" value="TRANSLATION INITIATION FACTOR IF-1, CHLOROPLASTIC"/>
    <property type="match status" value="1"/>
</dbReference>
<dbReference type="PANTHER" id="PTHR33370:SF1">
    <property type="entry name" value="TRANSLATION INITIATION FACTOR IF-1, CHLOROPLASTIC"/>
    <property type="match status" value="1"/>
</dbReference>
<dbReference type="Pfam" id="PF01176">
    <property type="entry name" value="eIF-1a"/>
    <property type="match status" value="1"/>
</dbReference>
<dbReference type="SUPFAM" id="SSF50249">
    <property type="entry name" value="Nucleic acid-binding proteins"/>
    <property type="match status" value="1"/>
</dbReference>
<dbReference type="PROSITE" id="PS50832">
    <property type="entry name" value="S1_IF1_TYPE"/>
    <property type="match status" value="1"/>
</dbReference>
<evidence type="ECO:0000255" key="1">
    <source>
        <dbReference type="HAMAP-Rule" id="MF_00075"/>
    </source>
</evidence>